<feature type="chain" id="PRO_0000047203" description="Transcriptional activator GLI3">
    <location>
        <begin position="1"/>
        <end position="1583"/>
    </location>
</feature>
<feature type="chain" id="PRO_0000406138" description="Transcriptional repressor GLI3R">
    <location>
        <begin position="1"/>
        <end status="unknown"/>
    </location>
</feature>
<feature type="zinc finger region" description="C2H2-type 1" evidence="3">
    <location>
        <begin position="480"/>
        <end position="505"/>
    </location>
</feature>
<feature type="zinc finger region" description="C2H2-type 2" evidence="3">
    <location>
        <begin position="513"/>
        <end position="540"/>
    </location>
</feature>
<feature type="zinc finger region" description="C2H2-type 3" evidence="3">
    <location>
        <begin position="546"/>
        <end position="570"/>
    </location>
</feature>
<feature type="zinc finger region" description="C2H2-type 4" evidence="3">
    <location>
        <begin position="576"/>
        <end position="601"/>
    </location>
</feature>
<feature type="zinc finger region" description="C2H2-type 5" evidence="3">
    <location>
        <begin position="607"/>
        <end position="632"/>
    </location>
</feature>
<feature type="region of interest" description="Disordered" evidence="4">
    <location>
        <begin position="1"/>
        <end position="78"/>
    </location>
</feature>
<feature type="region of interest" description="Disordered" evidence="4">
    <location>
        <begin position="368"/>
        <end position="475"/>
    </location>
</feature>
<feature type="region of interest" description="Disordered" evidence="4">
    <location>
        <begin position="620"/>
        <end position="728"/>
    </location>
</feature>
<feature type="region of interest" description="Mediates interaction with DZIP1" evidence="12">
    <location>
        <begin position="745"/>
        <end position="845"/>
    </location>
</feature>
<feature type="region of interest" description="Disordered" evidence="4">
    <location>
        <begin position="809"/>
        <end position="828"/>
    </location>
</feature>
<feature type="region of interest" description="Disordered" evidence="4">
    <location>
        <begin position="863"/>
        <end position="918"/>
    </location>
</feature>
<feature type="region of interest" description="Disordered" evidence="4">
    <location>
        <begin position="1164"/>
        <end position="1189"/>
    </location>
</feature>
<feature type="compositionally biased region" description="Polar residues" evidence="4">
    <location>
        <begin position="1"/>
        <end position="10"/>
    </location>
</feature>
<feature type="compositionally biased region" description="Polar residues" evidence="4">
    <location>
        <begin position="58"/>
        <end position="78"/>
    </location>
</feature>
<feature type="compositionally biased region" description="Low complexity" evidence="4">
    <location>
        <begin position="403"/>
        <end position="421"/>
    </location>
</feature>
<feature type="compositionally biased region" description="Polar residues" evidence="4">
    <location>
        <begin position="448"/>
        <end position="457"/>
    </location>
</feature>
<feature type="compositionally biased region" description="Basic and acidic residues" evidence="4">
    <location>
        <begin position="461"/>
        <end position="474"/>
    </location>
</feature>
<feature type="compositionally biased region" description="Basic and acidic residues" evidence="4">
    <location>
        <begin position="632"/>
        <end position="648"/>
    </location>
</feature>
<feature type="compositionally biased region" description="Basic and acidic residues" evidence="4">
    <location>
        <begin position="684"/>
        <end position="699"/>
    </location>
</feature>
<feature type="compositionally biased region" description="Low complexity" evidence="4">
    <location>
        <begin position="703"/>
        <end position="726"/>
    </location>
</feature>
<feature type="compositionally biased region" description="Polar residues" evidence="4">
    <location>
        <begin position="810"/>
        <end position="820"/>
    </location>
</feature>
<feature type="compositionally biased region" description="Low complexity" evidence="4">
    <location>
        <begin position="863"/>
        <end position="880"/>
    </location>
</feature>
<feature type="compositionally biased region" description="Low complexity" evidence="4">
    <location>
        <begin position="1166"/>
        <end position="1175"/>
    </location>
</feature>
<feature type="modified residue" description="N-acetylmethionine" evidence="2">
    <location>
        <position position="1"/>
    </location>
</feature>
<feature type="modified residue" description="Omega-N-methylarginine" evidence="15">
    <location>
        <position position="175"/>
    </location>
</feature>
<feature type="modified residue" description="Phosphoserine" evidence="2">
    <location>
        <position position="664"/>
    </location>
</feature>
<feature type="modified residue" description="Phosphoserine; by PKA" evidence="2">
    <location>
        <position position="849"/>
    </location>
</feature>
<feature type="modified residue" description="Phosphoserine; by PKA" evidence="2">
    <location>
        <position position="865"/>
    </location>
</feature>
<feature type="modified residue" description="Phosphoserine; by PKA" evidence="2">
    <location>
        <position position="877"/>
    </location>
</feature>
<feature type="modified residue" description="Phosphoserine; by PKA" evidence="2">
    <location>
        <position position="907"/>
    </location>
</feature>
<feature type="modified residue" description="Phosphoserine; by PKA" evidence="2">
    <location>
        <position position="980"/>
    </location>
</feature>
<feature type="modified residue" description="Phosphoserine; by PKA" evidence="2">
    <location>
        <position position="1006"/>
    </location>
</feature>
<feature type="cross-link" description="Glycyl lysine isopeptide (Lys-Gly) (interchain with G-Cter in SUMO2)" evidence="2">
    <location>
        <position position="438"/>
    </location>
</feature>
<feature type="cross-link" description="Glycyl lysine isopeptide (Lys-Gly) (interchain with G-Cter in SUMO2)" evidence="2">
    <location>
        <position position="462"/>
    </location>
</feature>
<feature type="cross-link" description="Glycyl lysine isopeptide (Lys-Gly) (interchain with G-Cter in ubiquitin)" evidence="2">
    <location>
        <position position="773"/>
    </location>
</feature>
<feature type="cross-link" description="Glycyl lysine isopeptide (Lys-Gly) (interchain with G-Cter in SUMO2); alternate" evidence="2">
    <location>
        <position position="779"/>
    </location>
</feature>
<feature type="cross-link" description="Glycyl lysine isopeptide (Lys-Gly) (interchain with G-Cter in ubiquitin); alternate" evidence="2">
    <location>
        <position position="779"/>
    </location>
</feature>
<feature type="cross-link" description="Glycyl lysine isopeptide (Lys-Gly) (interchain with G-Cter in ubiquitin)" evidence="2">
    <location>
        <position position="784"/>
    </location>
</feature>
<feature type="cross-link" description="Glycyl lysine isopeptide (Lys-Gly) (interchain with G-Cter in ubiquitin)" evidence="2">
    <location>
        <position position="800"/>
    </location>
</feature>
<feature type="sequence conflict" description="In Ref. 1; CAA64543." evidence="14" ref="1">
    <original>S</original>
    <variation>C</variation>
    <location>
        <position position="209"/>
    </location>
</feature>
<feature type="sequence conflict" description="In Ref. 1; CAA64543." evidence="14" ref="1">
    <original>D</original>
    <variation>G</variation>
    <location>
        <position position="428"/>
    </location>
</feature>
<feature type="sequence conflict" description="In Ref. 1; CAA64543." evidence="14" ref="1">
    <original>R</original>
    <variation>A</variation>
    <location>
        <position position="928"/>
    </location>
</feature>
<feature type="sequence conflict" description="In Ref. 1; CAA64543." evidence="14" ref="1">
    <original>A</original>
    <variation>P</variation>
    <location>
        <position position="936"/>
    </location>
</feature>
<feature type="sequence conflict" description="In Ref. 1; CAA64543." evidence="14" ref="1">
    <original>A</original>
    <variation>D</variation>
    <location>
        <position position="1005"/>
    </location>
</feature>
<feature type="sequence conflict" description="In Ref. 1; CAA64543." evidence="14" ref="1">
    <original>SA</original>
    <variation>R</variation>
    <location>
        <begin position="1185"/>
        <end position="1186"/>
    </location>
</feature>
<feature type="sequence conflict" description="In Ref. 1; CAA64543." evidence="14" ref="1">
    <original>NG</original>
    <variation>TC</variation>
    <location>
        <begin position="1475"/>
        <end position="1476"/>
    </location>
</feature>
<protein>
    <recommendedName>
        <fullName>Transcriptional activator GLI3</fullName>
    </recommendedName>
    <alternativeName>
        <fullName>GLI3 form of 190 kDa</fullName>
        <shortName>GLI3-190</shortName>
    </alternativeName>
    <alternativeName>
        <fullName>GLI3 full-length protein</fullName>
        <shortName>GLI3FL</shortName>
    </alternativeName>
    <component>
        <recommendedName>
            <fullName>Transcriptional repressor GLI3R</fullName>
        </recommendedName>
        <alternativeName>
            <fullName>GLI3 C-terminally truncated form</fullName>
        </alternativeName>
        <alternativeName>
            <fullName>GLI3 form of 83 kDa</fullName>
            <shortName>GLI3-83</shortName>
        </alternativeName>
    </component>
</protein>
<keyword id="KW-0007">Acetylation</keyword>
<keyword id="KW-0010">Activator</keyword>
<keyword id="KW-0966">Cell projection</keyword>
<keyword id="KW-0969">Cilium</keyword>
<keyword id="KW-0963">Cytoplasm</keyword>
<keyword id="KW-0238">DNA-binding</keyword>
<keyword id="KW-1017">Isopeptide bond</keyword>
<keyword id="KW-0479">Metal-binding</keyword>
<keyword id="KW-0488">Methylation</keyword>
<keyword id="KW-0539">Nucleus</keyword>
<keyword id="KW-0597">Phosphoprotein</keyword>
<keyword id="KW-1185">Reference proteome</keyword>
<keyword id="KW-0677">Repeat</keyword>
<keyword id="KW-0678">Repressor</keyword>
<keyword id="KW-0804">Transcription</keyword>
<keyword id="KW-0805">Transcription regulation</keyword>
<keyword id="KW-0832">Ubl conjugation</keyword>
<keyword id="KW-0862">Zinc</keyword>
<keyword id="KW-0863">Zinc-finger</keyword>
<evidence type="ECO:0000250" key="1"/>
<evidence type="ECO:0000250" key="2">
    <source>
        <dbReference type="UniProtKB" id="P10071"/>
    </source>
</evidence>
<evidence type="ECO:0000255" key="3">
    <source>
        <dbReference type="PROSITE-ProRule" id="PRU00042"/>
    </source>
</evidence>
<evidence type="ECO:0000256" key="4">
    <source>
        <dbReference type="SAM" id="MobiDB-lite"/>
    </source>
</evidence>
<evidence type="ECO:0000269" key="5">
    <source>
    </source>
</evidence>
<evidence type="ECO:0000269" key="6">
    <source>
    </source>
</evidence>
<evidence type="ECO:0000269" key="7">
    <source>
    </source>
</evidence>
<evidence type="ECO:0000269" key="8">
    <source>
    </source>
</evidence>
<evidence type="ECO:0000269" key="9">
    <source>
    </source>
</evidence>
<evidence type="ECO:0000269" key="10">
    <source>
    </source>
</evidence>
<evidence type="ECO:0000269" key="11">
    <source>
    </source>
</evidence>
<evidence type="ECO:0000269" key="12">
    <source>
    </source>
</evidence>
<evidence type="ECO:0000269" key="13">
    <source>
    </source>
</evidence>
<evidence type="ECO:0000305" key="14"/>
<evidence type="ECO:0007744" key="15">
    <source>
    </source>
</evidence>
<organism>
    <name type="scientific">Mus musculus</name>
    <name type="common">Mouse</name>
    <dbReference type="NCBI Taxonomy" id="10090"/>
    <lineage>
        <taxon>Eukaryota</taxon>
        <taxon>Metazoa</taxon>
        <taxon>Chordata</taxon>
        <taxon>Craniata</taxon>
        <taxon>Vertebrata</taxon>
        <taxon>Euteleostomi</taxon>
        <taxon>Mammalia</taxon>
        <taxon>Eutheria</taxon>
        <taxon>Euarchontoglires</taxon>
        <taxon>Glires</taxon>
        <taxon>Rodentia</taxon>
        <taxon>Myomorpha</taxon>
        <taxon>Muroidea</taxon>
        <taxon>Muridae</taxon>
        <taxon>Murinae</taxon>
        <taxon>Mus</taxon>
        <taxon>Mus</taxon>
    </lineage>
</organism>
<gene>
    <name type="primary">Gli3</name>
</gene>
<dbReference type="EMBL" id="X95255">
    <property type="protein sequence ID" value="CAA64543.1"/>
    <property type="status" value="ALT_FRAME"/>
    <property type="molecule type" value="mRNA"/>
</dbReference>
<dbReference type="EMBL" id="AC163610">
    <property type="status" value="NOT_ANNOTATED_CDS"/>
    <property type="molecule type" value="Genomic_DNA"/>
</dbReference>
<dbReference type="EMBL" id="AC173115">
    <property type="status" value="NOT_ANNOTATED_CDS"/>
    <property type="molecule type" value="Genomic_DNA"/>
</dbReference>
<dbReference type="EMBL" id="AC173210">
    <property type="status" value="NOT_ANNOTATED_CDS"/>
    <property type="molecule type" value="Genomic_DNA"/>
</dbReference>
<dbReference type="CCDS" id="CCDS36603.1"/>
<dbReference type="RefSeq" id="NP_032156.2">
    <property type="nucleotide sequence ID" value="NM_008130.3"/>
</dbReference>
<dbReference type="SMR" id="Q61602"/>
<dbReference type="BioGRID" id="199944">
    <property type="interactions" value="30"/>
</dbReference>
<dbReference type="ComplexPortal" id="CPX-151">
    <property type="entry name" value="GLI3-SUFU complex"/>
</dbReference>
<dbReference type="CORUM" id="Q61602"/>
<dbReference type="FunCoup" id="Q61602">
    <property type="interactions" value="2182"/>
</dbReference>
<dbReference type="IntAct" id="Q61602">
    <property type="interactions" value="2"/>
</dbReference>
<dbReference type="MINT" id="Q61602"/>
<dbReference type="STRING" id="10090.ENSMUSP00000106137"/>
<dbReference type="GlyGen" id="Q61602">
    <property type="glycosylation" value="7 sites, 3 N-linked glycans (3 sites), 1 O-linked glycan (3 sites)"/>
</dbReference>
<dbReference type="iPTMnet" id="Q61602"/>
<dbReference type="PhosphoSitePlus" id="Q61602"/>
<dbReference type="jPOST" id="Q61602"/>
<dbReference type="PaxDb" id="10090-ENSMUSP00000106137"/>
<dbReference type="ProteomicsDB" id="263366"/>
<dbReference type="Pumba" id="Q61602"/>
<dbReference type="Antibodypedia" id="647">
    <property type="antibodies" value="292 antibodies from 38 providers"/>
</dbReference>
<dbReference type="DNASU" id="14634"/>
<dbReference type="Ensembl" id="ENSMUST00000110510.4">
    <property type="protein sequence ID" value="ENSMUSP00000106137.4"/>
    <property type="gene ID" value="ENSMUSG00000021318.16"/>
</dbReference>
<dbReference type="GeneID" id="14634"/>
<dbReference type="KEGG" id="mmu:14634"/>
<dbReference type="UCSC" id="uc007pns.1">
    <property type="organism name" value="mouse"/>
</dbReference>
<dbReference type="AGR" id="MGI:95729"/>
<dbReference type="CTD" id="2737"/>
<dbReference type="MGI" id="MGI:95729">
    <property type="gene designation" value="Gli3"/>
</dbReference>
<dbReference type="VEuPathDB" id="HostDB:ENSMUSG00000021318"/>
<dbReference type="eggNOG" id="KOG1721">
    <property type="taxonomic scope" value="Eukaryota"/>
</dbReference>
<dbReference type="GeneTree" id="ENSGT00940000155925"/>
<dbReference type="HOGENOM" id="CLU_003666_3_0_1"/>
<dbReference type="InParanoid" id="Q61602"/>
<dbReference type="OMA" id="NMMEQEY"/>
<dbReference type="OrthoDB" id="3214149at2759"/>
<dbReference type="PhylomeDB" id="Q61602"/>
<dbReference type="TreeFam" id="TF350216"/>
<dbReference type="Reactome" id="R-MMU-5610785">
    <property type="pathway name" value="GLI3 is processed to GLI3R by the proteasome"/>
</dbReference>
<dbReference type="Reactome" id="R-MMU-5610787">
    <property type="pathway name" value="Hedgehog 'off' state"/>
</dbReference>
<dbReference type="Reactome" id="R-MMU-5632684">
    <property type="pathway name" value="Hedgehog 'on' state"/>
</dbReference>
<dbReference type="BioGRID-ORCS" id="14634">
    <property type="hits" value="7 hits in 63 CRISPR screens"/>
</dbReference>
<dbReference type="CD-CODE" id="3F0300C2">
    <property type="entry name" value="Nuclear speckle"/>
</dbReference>
<dbReference type="ChiTaRS" id="Gli3">
    <property type="organism name" value="mouse"/>
</dbReference>
<dbReference type="PRO" id="PR:Q61602"/>
<dbReference type="Proteomes" id="UP000000589">
    <property type="component" value="Chromosome 13"/>
</dbReference>
<dbReference type="RNAct" id="Q61602">
    <property type="molecule type" value="protein"/>
</dbReference>
<dbReference type="Bgee" id="ENSMUSG00000021318">
    <property type="expression patterns" value="Expressed in maxillary prominence and 290 other cell types or tissues"/>
</dbReference>
<dbReference type="ExpressionAtlas" id="Q61602">
    <property type="expression patterns" value="baseline and differential"/>
</dbReference>
<dbReference type="GO" id="GO:0005930">
    <property type="term" value="C:axoneme"/>
    <property type="evidence" value="ECO:0000314"/>
    <property type="project" value="CACAO"/>
</dbReference>
<dbReference type="GO" id="GO:0005929">
    <property type="term" value="C:cilium"/>
    <property type="evidence" value="ECO:0000314"/>
    <property type="project" value="BHF-UCL"/>
</dbReference>
<dbReference type="GO" id="GO:0005737">
    <property type="term" value="C:cytoplasm"/>
    <property type="evidence" value="ECO:0000314"/>
    <property type="project" value="UniProtKB"/>
</dbReference>
<dbReference type="GO" id="GO:1990788">
    <property type="term" value="C:GLI-SUFU complex"/>
    <property type="evidence" value="ECO:0000266"/>
    <property type="project" value="ComplexPortal"/>
</dbReference>
<dbReference type="GO" id="GO:0016607">
    <property type="term" value="C:nuclear speck"/>
    <property type="evidence" value="ECO:0000314"/>
    <property type="project" value="MGI"/>
</dbReference>
<dbReference type="GO" id="GO:0005730">
    <property type="term" value="C:nucleolus"/>
    <property type="evidence" value="ECO:0007669"/>
    <property type="project" value="Ensembl"/>
</dbReference>
<dbReference type="GO" id="GO:0005654">
    <property type="term" value="C:nucleoplasm"/>
    <property type="evidence" value="ECO:0000304"/>
    <property type="project" value="Reactome"/>
</dbReference>
<dbReference type="GO" id="GO:0005634">
    <property type="term" value="C:nucleus"/>
    <property type="evidence" value="ECO:0000314"/>
    <property type="project" value="UniProtKB"/>
</dbReference>
<dbReference type="GO" id="GO:0017053">
    <property type="term" value="C:transcription repressor complex"/>
    <property type="evidence" value="ECO:0000314"/>
    <property type="project" value="MGI"/>
</dbReference>
<dbReference type="GO" id="GO:0008013">
    <property type="term" value="F:beta-catenin binding"/>
    <property type="evidence" value="ECO:0007669"/>
    <property type="project" value="Ensembl"/>
</dbReference>
<dbReference type="GO" id="GO:0003682">
    <property type="term" value="F:chromatin binding"/>
    <property type="evidence" value="ECO:0000316"/>
    <property type="project" value="MGI"/>
</dbReference>
<dbReference type="GO" id="GO:0003700">
    <property type="term" value="F:DNA-binding transcription factor activity"/>
    <property type="evidence" value="ECO:0000314"/>
    <property type="project" value="UniProtKB"/>
</dbReference>
<dbReference type="GO" id="GO:0035035">
    <property type="term" value="F:histone acetyltransferase binding"/>
    <property type="evidence" value="ECO:0007669"/>
    <property type="project" value="Ensembl"/>
</dbReference>
<dbReference type="GO" id="GO:0042826">
    <property type="term" value="F:histone deacetylase binding"/>
    <property type="evidence" value="ECO:0007669"/>
    <property type="project" value="Ensembl"/>
</dbReference>
<dbReference type="GO" id="GO:0036033">
    <property type="term" value="F:mediator complex binding"/>
    <property type="evidence" value="ECO:0007669"/>
    <property type="project" value="Ensembl"/>
</dbReference>
<dbReference type="GO" id="GO:0000978">
    <property type="term" value="F:RNA polymerase II cis-regulatory region sequence-specific DNA binding"/>
    <property type="evidence" value="ECO:0000266"/>
    <property type="project" value="MGI"/>
</dbReference>
<dbReference type="GO" id="GO:0000977">
    <property type="term" value="F:RNA polymerase II transcription regulatory region sequence-specific DNA binding"/>
    <property type="evidence" value="ECO:0000266"/>
    <property type="project" value="MGI"/>
</dbReference>
<dbReference type="GO" id="GO:0043565">
    <property type="term" value="F:sequence-specific DNA binding"/>
    <property type="evidence" value="ECO:0000314"/>
    <property type="project" value="MGI"/>
</dbReference>
<dbReference type="GO" id="GO:0008270">
    <property type="term" value="F:zinc ion binding"/>
    <property type="evidence" value="ECO:0007669"/>
    <property type="project" value="UniProtKB-KW"/>
</dbReference>
<dbReference type="GO" id="GO:0046632">
    <property type="term" value="P:alpha-beta T cell differentiation"/>
    <property type="evidence" value="ECO:0000315"/>
    <property type="project" value="MGI"/>
</dbReference>
<dbReference type="GO" id="GO:0048646">
    <property type="term" value="P:anatomical structure formation involved in morphogenesis"/>
    <property type="evidence" value="ECO:0000316"/>
    <property type="project" value="MGI"/>
</dbReference>
<dbReference type="GO" id="GO:0060873">
    <property type="term" value="P:anterior semicircular canal development"/>
    <property type="evidence" value="ECO:0000315"/>
    <property type="project" value="MGI"/>
</dbReference>
<dbReference type="GO" id="GO:0009952">
    <property type="term" value="P:anterior/posterior pattern specification"/>
    <property type="evidence" value="ECO:0000315"/>
    <property type="project" value="MGI"/>
</dbReference>
<dbReference type="GO" id="GO:0006915">
    <property type="term" value="P:apoptotic process"/>
    <property type="evidence" value="ECO:0000315"/>
    <property type="project" value="MGI"/>
</dbReference>
<dbReference type="GO" id="GO:0060840">
    <property type="term" value="P:artery development"/>
    <property type="evidence" value="ECO:0000316"/>
    <property type="project" value="MGI"/>
</dbReference>
<dbReference type="GO" id="GO:0007411">
    <property type="term" value="P:axon guidance"/>
    <property type="evidence" value="ECO:0000315"/>
    <property type="project" value="MGI"/>
</dbReference>
<dbReference type="GO" id="GO:0007420">
    <property type="term" value="P:brain development"/>
    <property type="evidence" value="ECO:0000315"/>
    <property type="project" value="MGI"/>
</dbReference>
<dbReference type="GO" id="GO:0001658">
    <property type="term" value="P:branching involved in ureteric bud morphogenesis"/>
    <property type="evidence" value="ECO:0000316"/>
    <property type="project" value="MGI"/>
</dbReference>
<dbReference type="GO" id="GO:0048754">
    <property type="term" value="P:branching morphogenesis of an epithelial tube"/>
    <property type="evidence" value="ECO:0000315"/>
    <property type="project" value="MGI"/>
</dbReference>
<dbReference type="GO" id="GO:0043010">
    <property type="term" value="P:camera-type eye development"/>
    <property type="evidence" value="ECO:0000316"/>
    <property type="project" value="MGI"/>
</dbReference>
<dbReference type="GO" id="GO:0048593">
    <property type="term" value="P:camera-type eye morphogenesis"/>
    <property type="evidence" value="ECO:0000315"/>
    <property type="project" value="MGI"/>
</dbReference>
<dbReference type="GO" id="GO:0061005">
    <property type="term" value="P:cell differentiation involved in kidney development"/>
    <property type="evidence" value="ECO:0000316"/>
    <property type="project" value="MGI"/>
</dbReference>
<dbReference type="GO" id="GO:0008283">
    <property type="term" value="P:cell population proliferation"/>
    <property type="evidence" value="ECO:0000315"/>
    <property type="project" value="MGI"/>
</dbReference>
<dbReference type="GO" id="GO:0007417">
    <property type="term" value="P:central nervous system development"/>
    <property type="evidence" value="ECO:0000315"/>
    <property type="project" value="MGI"/>
</dbReference>
<dbReference type="GO" id="GO:0021953">
    <property type="term" value="P:central nervous system neuron differentiation"/>
    <property type="evidence" value="ECO:0000315"/>
    <property type="project" value="MGI"/>
</dbReference>
<dbReference type="GO" id="GO:0021801">
    <property type="term" value="P:cerebral cortex radial glia-guided migration"/>
    <property type="evidence" value="ECO:0000315"/>
    <property type="project" value="MGI"/>
</dbReference>
<dbReference type="GO" id="GO:0002062">
    <property type="term" value="P:chondrocyte differentiation"/>
    <property type="evidence" value="ECO:0000316"/>
    <property type="project" value="MGI"/>
</dbReference>
<dbReference type="GO" id="GO:0048589">
    <property type="term" value="P:developmental growth"/>
    <property type="evidence" value="ECO:0000315"/>
    <property type="project" value="MGI"/>
</dbReference>
<dbReference type="GO" id="GO:0009953">
    <property type="term" value="P:dorsal/ventral pattern formation"/>
    <property type="evidence" value="ECO:0000315"/>
    <property type="project" value="MGI"/>
</dbReference>
<dbReference type="GO" id="GO:0048566">
    <property type="term" value="P:embryonic digestive tract development"/>
    <property type="evidence" value="ECO:0000315"/>
    <property type="project" value="MGI"/>
</dbReference>
<dbReference type="GO" id="GO:0048557">
    <property type="term" value="P:embryonic digestive tract morphogenesis"/>
    <property type="evidence" value="ECO:0000315"/>
    <property type="project" value="MGI"/>
</dbReference>
<dbReference type="GO" id="GO:0042733">
    <property type="term" value="P:embryonic digit morphogenesis"/>
    <property type="evidence" value="ECO:0000315"/>
    <property type="project" value="MGI"/>
</dbReference>
<dbReference type="GO" id="GO:0030326">
    <property type="term" value="P:embryonic limb morphogenesis"/>
    <property type="evidence" value="ECO:0000315"/>
    <property type="project" value="MGI"/>
</dbReference>
<dbReference type="GO" id="GO:0048598">
    <property type="term" value="P:embryonic morphogenesis"/>
    <property type="evidence" value="ECO:0000315"/>
    <property type="project" value="MGI"/>
</dbReference>
<dbReference type="GO" id="GO:0048702">
    <property type="term" value="P:embryonic neurocranium morphogenesis"/>
    <property type="evidence" value="ECO:0000315"/>
    <property type="project" value="MGI"/>
</dbReference>
<dbReference type="GO" id="GO:0048704">
    <property type="term" value="P:embryonic skeletal system morphogenesis"/>
    <property type="evidence" value="ECO:0000316"/>
    <property type="project" value="MGI"/>
</dbReference>
<dbReference type="GO" id="GO:0030900">
    <property type="term" value="P:forebrain development"/>
    <property type="evidence" value="ECO:0000315"/>
    <property type="project" value="MGI"/>
</dbReference>
<dbReference type="GO" id="GO:0021798">
    <property type="term" value="P:forebrain dorsal/ventral pattern formation"/>
    <property type="evidence" value="ECO:0000315"/>
    <property type="project" value="MGI"/>
</dbReference>
<dbReference type="GO" id="GO:0021861">
    <property type="term" value="P:forebrain radial glial cell differentiation"/>
    <property type="evidence" value="ECO:0000315"/>
    <property type="project" value="MGI"/>
</dbReference>
<dbReference type="GO" id="GO:0060364">
    <property type="term" value="P:frontal suture morphogenesis"/>
    <property type="evidence" value="ECO:0000315"/>
    <property type="project" value="MGI"/>
</dbReference>
<dbReference type="GO" id="GO:0010467">
    <property type="term" value="P:gene expression"/>
    <property type="evidence" value="ECO:0000315"/>
    <property type="project" value="MGI"/>
</dbReference>
<dbReference type="GO" id="GO:0007507">
    <property type="term" value="P:heart development"/>
    <property type="evidence" value="ECO:0000316"/>
    <property type="project" value="MGI"/>
</dbReference>
<dbReference type="GO" id="GO:0007442">
    <property type="term" value="P:hindgut morphogenesis"/>
    <property type="evidence" value="ECO:0000316"/>
    <property type="project" value="MGI"/>
</dbReference>
<dbReference type="GO" id="GO:0021766">
    <property type="term" value="P:hippocampus development"/>
    <property type="evidence" value="ECO:0000315"/>
    <property type="project" value="MGI"/>
</dbReference>
<dbReference type="GO" id="GO:0001701">
    <property type="term" value="P:in utero embryonic development"/>
    <property type="evidence" value="ECO:0000315"/>
    <property type="project" value="MGI"/>
</dbReference>
<dbReference type="GO" id="GO:0048839">
    <property type="term" value="P:inner ear development"/>
    <property type="evidence" value="ECO:0000316"/>
    <property type="project" value="MGI"/>
</dbReference>
<dbReference type="GO" id="GO:0001822">
    <property type="term" value="P:kidney development"/>
    <property type="evidence" value="ECO:0000316"/>
    <property type="project" value="MGI"/>
</dbReference>
<dbReference type="GO" id="GO:0060366">
    <property type="term" value="P:lambdoid suture morphogenesis"/>
    <property type="evidence" value="ECO:0000315"/>
    <property type="project" value="MGI"/>
</dbReference>
<dbReference type="GO" id="GO:0120223">
    <property type="term" value="P:larynx morphogenesis"/>
    <property type="evidence" value="ECO:0000315"/>
    <property type="project" value="MGI"/>
</dbReference>
<dbReference type="GO" id="GO:0022018">
    <property type="term" value="P:lateral ganglionic eminence cell proliferation"/>
    <property type="evidence" value="ECO:0000315"/>
    <property type="project" value="MGI"/>
</dbReference>
<dbReference type="GO" id="GO:0060875">
    <property type="term" value="P:lateral semicircular canal development"/>
    <property type="evidence" value="ECO:0000315"/>
    <property type="project" value="MGI"/>
</dbReference>
<dbReference type="GO" id="GO:0021819">
    <property type="term" value="P:layer formation in cerebral cortex"/>
    <property type="evidence" value="ECO:0000315"/>
    <property type="project" value="MGI"/>
</dbReference>
<dbReference type="GO" id="GO:0060173">
    <property type="term" value="P:limb development"/>
    <property type="evidence" value="ECO:0000315"/>
    <property type="project" value="UniProtKB"/>
</dbReference>
<dbReference type="GO" id="GO:0035108">
    <property type="term" value="P:limb morphogenesis"/>
    <property type="evidence" value="ECO:0000315"/>
    <property type="project" value="MGI"/>
</dbReference>
<dbReference type="GO" id="GO:0097421">
    <property type="term" value="P:liver regeneration"/>
    <property type="evidence" value="ECO:0007669"/>
    <property type="project" value="Ensembl"/>
</dbReference>
<dbReference type="GO" id="GO:0030324">
    <property type="term" value="P:lung development"/>
    <property type="evidence" value="ECO:0000315"/>
    <property type="project" value="MGI"/>
</dbReference>
<dbReference type="GO" id="GO:0030879">
    <property type="term" value="P:mammary gland development"/>
    <property type="evidence" value="ECO:0000315"/>
    <property type="project" value="MGI"/>
</dbReference>
<dbReference type="GO" id="GO:0060594">
    <property type="term" value="P:mammary gland specification"/>
    <property type="evidence" value="ECO:0000316"/>
    <property type="project" value="MGI"/>
</dbReference>
<dbReference type="GO" id="GO:0030318">
    <property type="term" value="P:melanocyte differentiation"/>
    <property type="evidence" value="ECO:0000315"/>
    <property type="project" value="MGI"/>
</dbReference>
<dbReference type="GO" id="GO:0001656">
    <property type="term" value="P:metanephros development"/>
    <property type="evidence" value="ECO:0000316"/>
    <property type="project" value="MGI"/>
</dbReference>
<dbReference type="GO" id="GO:0046639">
    <property type="term" value="P:negative regulation of alpha-beta T cell differentiation"/>
    <property type="evidence" value="ECO:0000315"/>
    <property type="project" value="BHF-UCL"/>
</dbReference>
<dbReference type="GO" id="GO:0043066">
    <property type="term" value="P:negative regulation of apoptotic process"/>
    <property type="evidence" value="ECO:0000315"/>
    <property type="project" value="MGI"/>
</dbReference>
<dbReference type="GO" id="GO:0090090">
    <property type="term" value="P:negative regulation of canonical Wnt signaling pathway"/>
    <property type="evidence" value="ECO:0007669"/>
    <property type="project" value="Ensembl"/>
</dbReference>
<dbReference type="GO" id="GO:0008285">
    <property type="term" value="P:negative regulation of cell population proliferation"/>
    <property type="evidence" value="ECO:0000315"/>
    <property type="project" value="MGI"/>
</dbReference>
<dbReference type="GO" id="GO:0032331">
    <property type="term" value="P:negative regulation of chondrocyte differentiation"/>
    <property type="evidence" value="ECO:0000316"/>
    <property type="project" value="MGI"/>
</dbReference>
<dbReference type="GO" id="GO:0045892">
    <property type="term" value="P:negative regulation of DNA-templated transcription"/>
    <property type="evidence" value="ECO:0000314"/>
    <property type="project" value="MGI"/>
</dbReference>
<dbReference type="GO" id="GO:0045665">
    <property type="term" value="P:negative regulation of neuron differentiation"/>
    <property type="evidence" value="ECO:0000315"/>
    <property type="project" value="MGI"/>
</dbReference>
<dbReference type="GO" id="GO:0045879">
    <property type="term" value="P:negative regulation of smoothened signaling pathway"/>
    <property type="evidence" value="ECO:0000315"/>
    <property type="project" value="BHF-UCL"/>
</dbReference>
<dbReference type="GO" id="GO:2000647">
    <property type="term" value="P:negative regulation of stem cell proliferation"/>
    <property type="evidence" value="ECO:0000315"/>
    <property type="project" value="MGI"/>
</dbReference>
<dbReference type="GO" id="GO:0000122">
    <property type="term" value="P:negative regulation of transcription by RNA polymerase II"/>
    <property type="evidence" value="ECO:0000266"/>
    <property type="project" value="MGI"/>
</dbReference>
<dbReference type="GO" id="GO:0045060">
    <property type="term" value="P:negative thymic T cell selection"/>
    <property type="evidence" value="ECO:0000315"/>
    <property type="project" value="BHF-UCL"/>
</dbReference>
<dbReference type="GO" id="GO:0021915">
    <property type="term" value="P:neural tube development"/>
    <property type="evidence" value="ECO:0000315"/>
    <property type="project" value="MGI"/>
</dbReference>
<dbReference type="GO" id="GO:0007405">
    <property type="term" value="P:neuroblast proliferation"/>
    <property type="evidence" value="ECO:0000315"/>
    <property type="project" value="MGI"/>
</dbReference>
<dbReference type="GO" id="GO:0048663">
    <property type="term" value="P:neuron fate commitment"/>
    <property type="evidence" value="ECO:0000315"/>
    <property type="project" value="MGI"/>
</dbReference>
<dbReference type="GO" id="GO:0042475">
    <property type="term" value="P:odontogenesis of dentin-containing tooth"/>
    <property type="evidence" value="ECO:0000316"/>
    <property type="project" value="MGI"/>
</dbReference>
<dbReference type="GO" id="GO:0048709">
    <property type="term" value="P:oligodendrocyte differentiation"/>
    <property type="evidence" value="ECO:0000316"/>
    <property type="project" value="MGI"/>
</dbReference>
<dbReference type="GO" id="GO:0021631">
    <property type="term" value="P:optic nerve morphogenesis"/>
    <property type="evidence" value="ECO:0000315"/>
    <property type="project" value="MGI"/>
</dbReference>
<dbReference type="GO" id="GO:0001649">
    <property type="term" value="P:osteoblast differentiation"/>
    <property type="evidence" value="ECO:0000315"/>
    <property type="project" value="MGI"/>
</dbReference>
<dbReference type="GO" id="GO:0021543">
    <property type="term" value="P:pallium development"/>
    <property type="evidence" value="ECO:0000315"/>
    <property type="project" value="MGI"/>
</dbReference>
<dbReference type="GO" id="GO:0007389">
    <property type="term" value="P:pattern specification process"/>
    <property type="evidence" value="ECO:0000316"/>
    <property type="project" value="MGI"/>
</dbReference>
<dbReference type="GO" id="GO:0046638">
    <property type="term" value="P:positive regulation of alpha-beta T cell differentiation"/>
    <property type="evidence" value="ECO:0000315"/>
    <property type="project" value="BHF-UCL"/>
</dbReference>
<dbReference type="GO" id="GO:0032332">
    <property type="term" value="P:positive regulation of chondrocyte differentiation"/>
    <property type="evidence" value="ECO:0000315"/>
    <property type="project" value="MGI"/>
</dbReference>
<dbReference type="GO" id="GO:0045893">
    <property type="term" value="P:positive regulation of DNA-templated transcription"/>
    <property type="evidence" value="ECO:0000314"/>
    <property type="project" value="UniProtKB"/>
</dbReference>
<dbReference type="GO" id="GO:0002052">
    <property type="term" value="P:positive regulation of neuroblast proliferation"/>
    <property type="evidence" value="ECO:0000315"/>
    <property type="project" value="MGI"/>
</dbReference>
<dbReference type="GO" id="GO:0045669">
    <property type="term" value="P:positive regulation of osteoblast differentiation"/>
    <property type="evidence" value="ECO:0000315"/>
    <property type="project" value="MGI"/>
</dbReference>
<dbReference type="GO" id="GO:0042307">
    <property type="term" value="P:positive regulation of protein import into nucleus"/>
    <property type="evidence" value="ECO:0000316"/>
    <property type="project" value="MGI"/>
</dbReference>
<dbReference type="GO" id="GO:0045944">
    <property type="term" value="P:positive regulation of transcription by RNA polymerase II"/>
    <property type="evidence" value="ECO:0000315"/>
    <property type="project" value="BHF-UCL"/>
</dbReference>
<dbReference type="GO" id="GO:0030850">
    <property type="term" value="P:prostate gland development"/>
    <property type="evidence" value="ECO:0007669"/>
    <property type="project" value="Ensembl"/>
</dbReference>
<dbReference type="GO" id="GO:0006606">
    <property type="term" value="P:protein import into nucleus"/>
    <property type="evidence" value="ECO:0000316"/>
    <property type="project" value="MGI"/>
</dbReference>
<dbReference type="GO" id="GO:0016485">
    <property type="term" value="P:protein processing"/>
    <property type="evidence" value="ECO:0000314"/>
    <property type="project" value="MGI"/>
</dbReference>
<dbReference type="GO" id="GO:0009954">
    <property type="term" value="P:proximal/distal pattern formation"/>
    <property type="evidence" value="ECO:0000315"/>
    <property type="project" value="MGI"/>
</dbReference>
<dbReference type="GO" id="GO:0042981">
    <property type="term" value="P:regulation of apoptotic process"/>
    <property type="evidence" value="ECO:0000315"/>
    <property type="project" value="MGI"/>
</dbReference>
<dbReference type="GO" id="GO:1903010">
    <property type="term" value="P:regulation of bone development"/>
    <property type="evidence" value="ECO:0000315"/>
    <property type="project" value="MGI"/>
</dbReference>
<dbReference type="GO" id="GO:0045595">
    <property type="term" value="P:regulation of cell differentiation"/>
    <property type="evidence" value="ECO:0000316"/>
    <property type="project" value="MGI"/>
</dbReference>
<dbReference type="GO" id="GO:0042127">
    <property type="term" value="P:regulation of cell population proliferation"/>
    <property type="evidence" value="ECO:0000316"/>
    <property type="project" value="MGI"/>
</dbReference>
<dbReference type="GO" id="GO:0006355">
    <property type="term" value="P:regulation of DNA-templated transcription"/>
    <property type="evidence" value="ECO:0000315"/>
    <property type="project" value="MGI"/>
</dbReference>
<dbReference type="GO" id="GO:0010468">
    <property type="term" value="P:regulation of gene expression"/>
    <property type="evidence" value="ECO:0000316"/>
    <property type="project" value="MGI"/>
</dbReference>
<dbReference type="GO" id="GO:0008589">
    <property type="term" value="P:regulation of smoothened signaling pathway"/>
    <property type="evidence" value="ECO:0000316"/>
    <property type="project" value="MGI"/>
</dbReference>
<dbReference type="GO" id="GO:0043627">
    <property type="term" value="P:response to estrogen"/>
    <property type="evidence" value="ECO:0007669"/>
    <property type="project" value="Ensembl"/>
</dbReference>
<dbReference type="GO" id="GO:0060021">
    <property type="term" value="P:roof of mouth development"/>
    <property type="evidence" value="ECO:0000315"/>
    <property type="project" value="MGI"/>
</dbReference>
<dbReference type="GO" id="GO:0060367">
    <property type="term" value="P:sagittal suture morphogenesis"/>
    <property type="evidence" value="ECO:0000315"/>
    <property type="project" value="MGI"/>
</dbReference>
<dbReference type="GO" id="GO:0007224">
    <property type="term" value="P:smoothened signaling pathway"/>
    <property type="evidence" value="ECO:0000316"/>
    <property type="project" value="MGI"/>
</dbReference>
<dbReference type="GO" id="GO:0060831">
    <property type="term" value="P:smoothened signaling pathway involved in dorsal/ventral neural tube patterning"/>
    <property type="evidence" value="ECO:0000316"/>
    <property type="project" value="MGI"/>
</dbReference>
<dbReference type="GO" id="GO:0021776">
    <property type="term" value="P:smoothened signaling pathway involved in spinal cord motor neuron cell fate specification"/>
    <property type="evidence" value="ECO:0000316"/>
    <property type="project" value="MGI"/>
</dbReference>
<dbReference type="GO" id="GO:0021775">
    <property type="term" value="P:smoothened signaling pathway involved in ventral spinal cord interneuron specification"/>
    <property type="evidence" value="ECO:0000316"/>
    <property type="project" value="MGI"/>
</dbReference>
<dbReference type="GO" id="GO:0021513">
    <property type="term" value="P:spinal cord dorsal/ventral patterning"/>
    <property type="evidence" value="ECO:0000316"/>
    <property type="project" value="MGI"/>
</dbReference>
<dbReference type="GO" id="GO:0021522">
    <property type="term" value="P:spinal cord motor neuron differentiation"/>
    <property type="evidence" value="ECO:0000316"/>
    <property type="project" value="MGI"/>
</dbReference>
<dbReference type="GO" id="GO:0072089">
    <property type="term" value="P:stem cell proliferation"/>
    <property type="evidence" value="ECO:0000315"/>
    <property type="project" value="MGI"/>
</dbReference>
<dbReference type="GO" id="GO:0021544">
    <property type="term" value="P:subpallium development"/>
    <property type="evidence" value="ECO:0000315"/>
    <property type="project" value="MGI"/>
</dbReference>
<dbReference type="GO" id="GO:0033077">
    <property type="term" value="P:T cell differentiation in thymus"/>
    <property type="evidence" value="ECO:0000315"/>
    <property type="project" value="BHF-UCL"/>
</dbReference>
<dbReference type="GO" id="GO:0021537">
    <property type="term" value="P:telencephalon development"/>
    <property type="evidence" value="ECO:0000315"/>
    <property type="project" value="MGI"/>
</dbReference>
<dbReference type="GO" id="GO:0070242">
    <property type="term" value="P:thymocyte apoptotic process"/>
    <property type="evidence" value="ECO:0000315"/>
    <property type="project" value="BHF-UCL"/>
</dbReference>
<dbReference type="GO" id="GO:0043586">
    <property type="term" value="P:tongue development"/>
    <property type="evidence" value="ECO:0000315"/>
    <property type="project" value="MGI"/>
</dbReference>
<dbReference type="GO" id="GO:0035295">
    <property type="term" value="P:tube development"/>
    <property type="evidence" value="ECO:0000316"/>
    <property type="project" value="MGI"/>
</dbReference>
<dbReference type="GO" id="GO:0071625">
    <property type="term" value="P:vocalization behavior"/>
    <property type="evidence" value="ECO:0000315"/>
    <property type="project" value="MGI"/>
</dbReference>
<dbReference type="FunFam" id="3.30.160.60:FF:000019">
    <property type="entry name" value="GLI family zinc finger 3"/>
    <property type="match status" value="1"/>
</dbReference>
<dbReference type="FunFam" id="3.30.160.60:FF:000031">
    <property type="entry name" value="GLI family zinc finger 3"/>
    <property type="match status" value="1"/>
</dbReference>
<dbReference type="FunFam" id="3.30.160.60:FF:000036">
    <property type="entry name" value="GLI family zinc finger 3"/>
    <property type="match status" value="1"/>
</dbReference>
<dbReference type="FunFam" id="3.30.160.60:FF:000048">
    <property type="entry name" value="GLI family zinc finger 3"/>
    <property type="match status" value="1"/>
</dbReference>
<dbReference type="FunFam" id="3.30.160.60:FF:000068">
    <property type="entry name" value="GLI family zinc finger 3"/>
    <property type="match status" value="1"/>
</dbReference>
<dbReference type="Gene3D" id="3.30.160.60">
    <property type="entry name" value="Classic Zinc Finger"/>
    <property type="match status" value="5"/>
</dbReference>
<dbReference type="InterPro" id="IPR043359">
    <property type="entry name" value="GLI-like"/>
</dbReference>
<dbReference type="InterPro" id="IPR056436">
    <property type="entry name" value="Znf-C2H2_ZIC1-5/GLI1-3-like"/>
</dbReference>
<dbReference type="InterPro" id="IPR036236">
    <property type="entry name" value="Znf_C2H2_sf"/>
</dbReference>
<dbReference type="InterPro" id="IPR013087">
    <property type="entry name" value="Znf_C2H2_type"/>
</dbReference>
<dbReference type="PANTHER" id="PTHR45718">
    <property type="entry name" value="TRANSCRIPTIONAL ACTIVATOR CUBITUS INTERRUPTUS"/>
    <property type="match status" value="1"/>
</dbReference>
<dbReference type="PANTHER" id="PTHR45718:SF5">
    <property type="entry name" value="TRANSCRIPTIONAL ACTIVATOR GLI3"/>
    <property type="match status" value="1"/>
</dbReference>
<dbReference type="Pfam" id="PF00096">
    <property type="entry name" value="zf-C2H2"/>
    <property type="match status" value="2"/>
</dbReference>
<dbReference type="Pfam" id="PF23561">
    <property type="entry name" value="zf-C2H2_15"/>
    <property type="match status" value="1"/>
</dbReference>
<dbReference type="SMART" id="SM00355">
    <property type="entry name" value="ZnF_C2H2"/>
    <property type="match status" value="5"/>
</dbReference>
<dbReference type="SUPFAM" id="SSF57667">
    <property type="entry name" value="beta-beta-alpha zinc fingers"/>
    <property type="match status" value="3"/>
</dbReference>
<dbReference type="PROSITE" id="PS00028">
    <property type="entry name" value="ZINC_FINGER_C2H2_1"/>
    <property type="match status" value="4"/>
</dbReference>
<dbReference type="PROSITE" id="PS50157">
    <property type="entry name" value="ZINC_FINGER_C2H2_2"/>
    <property type="match status" value="5"/>
</dbReference>
<sequence>MEAQAHSSTATERKKAENSIGKCPTRTDVSEKAVASSTTSNEDESPGQIYHRERRNAITMQPQSVQGLNKISEEPSTSSDERASLIKKEIHGSLPHLAEPSLPYRGTVFAMDPRNGYMEPHYHPPHLFPAFHPPVPIDARHHEGRYHYDPSPIPPLHVPSALSSSPTYPDLPFIRISPHRNPTAASESPFSPPHPYINPYMDYIRSLHSSPSLSMISAARGLSPTDAPHAGVSPAEYYHQMALLTGQRSPYADILPSAATAGAGAIHMEYLHAMDSTRFPSPRLSARPSRKRTLSISPLSDHSFDLQTMIRTSPNSLVTILNNSRSSSSASGSYGHLSASAISPALSFTYPSAPVSLHMHQQILSRQQSLGSAFGHSPPLIHPAPTFPTQRPIPGIPTVLNPVQVSSGPSESSQSKPTSESAVSSTGDPMHNKRSKIKPDEDLPSPGSRGQQEQPEGTTLVKEEADKDESKQEPEVIYETNCHWEGCTREFDTQDQLVHHINNDHIHGEKKEFVCRWLDCSREQKPFKAQYMLVVHMRRHTGEKPHKCTFEGCTKAYSRLENLKTHLRSHTGEKPYVCEHEGCNKAFSNASDRAKHQNRTHSNEKPYVCKIPGCTKRYTDPSSLRKHVKTVHGPEAHVTKKQRGDMHPRPPPPRDSGSHSQSRSPGRPTQGAFGEQKELSNTTSKREECLQVKTVKAEKPMTSQPSPGGQSSCSSQQSPISNYSNSGLELPLTDGGSVADLSAIDETPIMDSTISTATTALALQARRNPAGTKWMEHIKLERLKQVNGMFPRLNPILPSKAPAVSPLIGNGTQSNNNYSSGGPGTLLPSRSDLSGVDFTVLNTLNRRDSNTSTISSAYLSSRRSSGISPCFSSRRSSEASQAEGRPQNVSVADSYDPISTDASRRSSEASQGDGLPSLLSLTPVQQYRLKAKYAAATGGPPPTPLPHMERLSLKTKMALLGEGRDSGVTLPPVHPPRRCSDGGGHTYRGRHLMPHDALANSVRRASDPVRTVSENMSLARVQRFSSLNSFNPPNLPPSVEKRSLVLQNYTRQESSQPRYFQASPCPPSITENVALEALTMDADANLNDEDLLPDDVVQYLNSQNQTGYGQQLQSGISEDSKVAHEPEDLDLAGLPDSHVGQEYPALEQPCSEGSKTDLPIQWNEVSSGTSDLSSSKLKCGQQRPSAQQPRGFGLYNNMVVHPHNLWKVGTGPAGGYQTLGENSSTYNGPEHFAIHSGDGLGTNGNTFHEQPFKTQQYGSQLNRQPLTSSALDHACGTGIQGSKLKGNSLQENGGLLDFSLSVAPNELAGNTVNGMQTQDQMGQGYIAHQLLSGSMQHQGPSRPGQQVLGQVGATSHINIYQGTESCLPGTQDNSSQPSSMAAIRGYQPCASYGGNRRQAMPRGNLTLQQGQLSDMSQSSRVNSIKMEAQGQSQQLCSTVQNYSGQFYDQTMGFSQQDRKAGSFSLSDANCLLQGNGTENSELLSPGANQVTSTVDSFESHDLEGVQIDFDAIIDDGDHTSLMSGALSPSIIQNLSHSSSRLTTPRASLPFPSLSMGTTNMAIGDMSSLLTSLAEESKFLAVMQ</sequence>
<name>GLI3_MOUSE</name>
<accession>Q61602</accession>
<reference key="1">
    <citation type="journal article" date="1996" name="Biochim. Biophys. Acta">
        <title>Cloning and sequence analysis of the murine Gli3 cDNA.</title>
        <authorList>
            <person name="Thien H."/>
            <person name="Buescher D."/>
            <person name="Ruether U."/>
        </authorList>
    </citation>
    <scope>NUCLEOTIDE SEQUENCE [MRNA]</scope>
    <source>
        <strain>NIH Swiss</strain>
    </source>
</reference>
<reference key="2">
    <citation type="journal article" date="2009" name="PLoS Biol.">
        <title>Lineage-specific biology revealed by a finished genome assembly of the mouse.</title>
        <authorList>
            <person name="Church D.M."/>
            <person name="Goodstadt L."/>
            <person name="Hillier L.W."/>
            <person name="Zody M.C."/>
            <person name="Goldstein S."/>
            <person name="She X."/>
            <person name="Bult C.J."/>
            <person name="Agarwala R."/>
            <person name="Cherry J.L."/>
            <person name="DiCuccio M."/>
            <person name="Hlavina W."/>
            <person name="Kapustin Y."/>
            <person name="Meric P."/>
            <person name="Maglott D."/>
            <person name="Birtle Z."/>
            <person name="Marques A.C."/>
            <person name="Graves T."/>
            <person name="Zhou S."/>
            <person name="Teague B."/>
            <person name="Potamousis K."/>
            <person name="Churas C."/>
            <person name="Place M."/>
            <person name="Herschleb J."/>
            <person name="Runnheim R."/>
            <person name="Forrest D."/>
            <person name="Amos-Landgraf J."/>
            <person name="Schwartz D.C."/>
            <person name="Cheng Z."/>
            <person name="Lindblad-Toh K."/>
            <person name="Eichler E.E."/>
            <person name="Ponting C.P."/>
        </authorList>
    </citation>
    <scope>NUCLEOTIDE SEQUENCE [LARGE SCALE GENOMIC DNA]</scope>
    <source>
        <strain>C57BL/6J</strain>
    </source>
</reference>
<reference key="3">
    <citation type="journal article" date="1990" name="Development">
        <title>Evidence for allelism of the recessive insertional mutation add and the dominant mouse mutation extra-toes (Xt).</title>
        <authorList>
            <person name="Pohl T.M."/>
            <person name="Mattei M.G."/>
            <person name="Ruether U."/>
        </authorList>
    </citation>
    <scope>DISEASE</scope>
</reference>
<reference key="4">
    <citation type="journal article" date="1999" name="Mamm. Genome">
        <title>The mouse mutation Pdn (Polydactyly Nagoya) is caused by the integration of a retrotransposon into the Gli3 gene.</title>
        <authorList>
            <person name="Thien H."/>
            <person name="Ruether U."/>
        </authorList>
    </citation>
    <scope>DISEASE</scope>
</reference>
<reference key="5">
    <citation type="journal article" date="2000" name="Cell">
        <title>Hedgehog-regulated processing of Gli3 produces an anterior/posterior repressor gradient in the developing vertebrate limb.</title>
        <authorList>
            <person name="Wang B."/>
            <person name="Fallon J.F."/>
            <person name="Beachy P.A."/>
        </authorList>
    </citation>
    <scope>FUNCTION</scope>
    <scope>PROTEOLYTIC PROCESSING</scope>
</reference>
<reference key="6">
    <citation type="journal article" date="2001" name="J. Biol. Chem.">
        <title>Molecular properties of Zic proteins as transcriptional regulators and their relationship to GLI proteins.</title>
        <authorList>
            <person name="Mizugishi K."/>
            <person name="Aruga J."/>
            <person name="Nakata K."/>
            <person name="Mikoshiba K."/>
        </authorList>
    </citation>
    <scope>FUNCTION</scope>
    <scope>DNA-BINDING</scope>
</reference>
<reference key="7">
    <citation type="journal article" date="2007" name="Dev. Biol.">
        <title>The Shh-independent activator function of the full-length Gli3 protein and its role in vertebrate limb digit patterning.</title>
        <authorList>
            <person name="Wang C."/>
            <person name="Ruther U."/>
            <person name="Wang B."/>
        </authorList>
    </citation>
    <scope>FUNCTION</scope>
</reference>
<reference key="8">
    <citation type="journal article" date="2009" name="Curr. Biol.">
        <title>The mammalian Cos2 homolog Kif7 plays an essential role in modulating Hh signal transduction during development.</title>
        <authorList>
            <person name="Endoh-Yamagami S."/>
            <person name="Evangelista M."/>
            <person name="Wilson D."/>
            <person name="Wen X."/>
            <person name="Theunissen J.W."/>
            <person name="Phamluong K."/>
            <person name="Davis M."/>
            <person name="Scales S.J."/>
            <person name="Solloway M.J."/>
            <person name="de Sauvage F.J."/>
            <person name="Peterson A.S."/>
        </authorList>
    </citation>
    <scope>PROTEOLYTIC PROCESSING</scope>
</reference>
<reference key="9">
    <citation type="journal article" date="2009" name="Dev. Biol.">
        <title>Trps1, a regulator of chondrocyte proliferation and differentiation, interacts with the activator form of Gli3.</title>
        <authorList>
            <person name="Wuelling M."/>
            <person name="Kaiser F.J."/>
            <person name="Buelens L.A."/>
            <person name="Braunholz D."/>
            <person name="Shivdasani R.A."/>
            <person name="Depping R."/>
            <person name="Vortkamp A."/>
        </authorList>
    </citation>
    <scope>FUNCTION</scope>
    <scope>INTERACTION WITH TRPS1</scope>
</reference>
<reference key="10">
    <citation type="journal article" date="2009" name="Sci. Signal.">
        <title>The kinesin protein Kif7 is a critical regulator of Gli transcription factors in mammalian hedgehog signaling.</title>
        <authorList>
            <person name="Cheung H.O."/>
            <person name="Zhang X."/>
            <person name="Ribeiro A."/>
            <person name="Mo R."/>
            <person name="Makino S."/>
            <person name="Puviindran V."/>
            <person name="Law K.K."/>
            <person name="Briscoe J."/>
            <person name="Hui C.C."/>
        </authorList>
    </citation>
    <scope>INTERACTION WITH KIF7</scope>
</reference>
<reference key="11">
    <citation type="journal article" date="2010" name="Genes Dev.">
        <title>The output of Hedgehog signaling is controlled by the dynamic association between Suppressor of Fused and the Gli proteins.</title>
        <authorList>
            <person name="Humke E.W."/>
            <person name="Dorn K.V."/>
            <person name="Milenkovic L."/>
            <person name="Scott M.P."/>
            <person name="Rohatgi R."/>
        </authorList>
    </citation>
    <scope>FUNCTION</scope>
    <scope>SUBCELLULAR LOCATION</scope>
    <scope>PHOSPHORYLATION</scope>
    <scope>INTERACTION WITH SUFU</scope>
</reference>
<reference key="12">
    <citation type="journal article" date="2013" name="J. Biol. Chem.">
        <title>Centrosomal protein DZIP1 regulates Hedgehog signaling by promoting cytoplasmic retention of transcription factor GLI3 and affecting ciliogenesis.</title>
        <authorList>
            <person name="Wang C."/>
            <person name="Low W.C."/>
            <person name="Liu A."/>
            <person name="Wang B."/>
        </authorList>
    </citation>
    <scope>INTERACTION WITH DZIP1</scope>
    <scope>REGION</scope>
</reference>
<reference key="13">
    <citation type="journal article" date="2014" name="Mol. Cell. Proteomics">
        <title>Immunoaffinity enrichment and mass spectrometry analysis of protein methylation.</title>
        <authorList>
            <person name="Guo A."/>
            <person name="Gu H."/>
            <person name="Zhou J."/>
            <person name="Mulhern D."/>
            <person name="Wang Y."/>
            <person name="Lee K.A."/>
            <person name="Yang V."/>
            <person name="Aguiar M."/>
            <person name="Kornhauser J."/>
            <person name="Jia X."/>
            <person name="Ren J."/>
            <person name="Beausoleil S.A."/>
            <person name="Silva J.C."/>
            <person name="Vemulapalli V."/>
            <person name="Bedford M.T."/>
            <person name="Comb M.J."/>
        </authorList>
    </citation>
    <scope>METHYLATION [LARGE SCALE ANALYSIS] AT ARG-175</scope>
    <scope>IDENTIFICATION BY MASS SPECTROMETRY [LARGE SCALE ANALYSIS]</scope>
    <source>
        <tissue>Embryo</tissue>
    </source>
</reference>
<reference key="14">
    <citation type="journal article" date="2018" name="EMBO Rep.">
        <title>WDR11-mediated Hedgehog signalling defects underlie a new ciliopathy related to Kallmann syndrome.</title>
        <authorList>
            <person name="Kim Y.J."/>
            <person name="Osborn D.P."/>
            <person name="Lee J.Y."/>
            <person name="Araki M."/>
            <person name="Araki K."/>
            <person name="Mohun T."/>
            <person name="Kaensaekoski J."/>
            <person name="Brandstack N."/>
            <person name="Kim H.T."/>
            <person name="Miralles F."/>
            <person name="Kim C.H."/>
            <person name="Brown N.A."/>
            <person name="Kim H.G."/>
            <person name="Martinez-Barbera J.P."/>
            <person name="Ataliotis P."/>
            <person name="Raivio T."/>
            <person name="Layman L.C."/>
            <person name="Kim S.H."/>
        </authorList>
    </citation>
    <scope>INTERACTION WITH WDR11</scope>
</reference>
<comment type="function">
    <text evidence="6 7 8 9 11">Has a dual function as a transcriptional activator and a repressor of the sonic hedgehog (Shh) pathway, and plays a role in limb development. The full-length GLI3 form (GLI3FL) after phosphorylation and nuclear translocation, acts as an activator (GLI3A) while GLI3R, its C-terminally truncated form, acts as a repressor. A proper balance between the GLI3 activator and the repressor GLI3R, rather than the repressor gradient itself or the activator/repressor ratio gradient, specifies limb digit number and identity. In concert with TRPS1, plays a role in regulating the size of the zone of distal chondrocytes, in restricting the zone of PTHLH expression in distal cells and in activating chondrocyte proliferation. Binds to the minimal GLI-consensus sequence 5'-GGGTGGTC-3'.</text>
</comment>
<comment type="subunit">
    <text evidence="2 12 13">The phosphorylated form interacts with BTRC (By similarity). The full-length GLI3 form (GLI3FL) interacts with SUFU and this interaction regulates the formation of either repressor or activator forms of GLI3. Its association with SUFU is regulated by Hh signaling and dissociation of the SUFU-GLI3 interaction requires the presence of the ciliary motor KIF3A. Interacts with KIF7. The activator form of GLI3 (GLI3A) but not the repressor form (GLI3R) can interact with TRPS1. Interacts with ZIC1. Interacts with ZIC3 (via C2H2-type domains 3, 4 and 5); the interaction enhances its transcriptional activity (By similarity). Interacts with WRD11; the interaction associates EMX1 with GLI3 (PubMed:29263200). Interacts with DZIP1; retains GLI3 within the cytoplasm (PubMed:23955340).</text>
</comment>
<comment type="subcellular location">
    <subcellularLocation>
        <location evidence="11">Nucleus</location>
    </subcellularLocation>
    <subcellularLocation>
        <location evidence="11">Cytoplasm</location>
    </subcellularLocation>
    <subcellularLocation>
        <location evidence="11">Cell projection</location>
        <location evidence="11">Cilium</location>
    </subcellularLocation>
    <text evidence="1">Translocation to the nucleus is promoted by interaction with ZIC1 (By similarity). GLI3FL is localized predominantly in the cytoplasm while GLI3R resides mainly in the nucleus. Ciliary accumulation requires the presence of KIF7 and SMO.</text>
</comment>
<comment type="PTM">
    <text evidence="1 11">Phosphorylated by DYRK2 (in vitro) (By similarity). Phosphorylated on multiple sites by protein kinase A (PKA) and phosphorylation by PKA primes further phosphorylation by CK1 and GSK3. Phosphorylation is essential for its proteolytic processing.</text>
</comment>
<comment type="PTM">
    <text evidence="11">Transcriptional repressor GLI3R, a C-terminally truncated form, is generated from the full-length GLI3 protein (GLI3FL/GLI3-190) through proteolytic processing. This process requires PKA-primed phosphorylation of GLI3, ubiquitination of GLI3 and the presence of BTRC. GLI3FL is complexed with SUFU in the cytoplasm and is maintained in a neutral state. Without the Hh signal, the SUFU-GLI3 complex is recruited to cilia, leading to the efficient processing of GLI3FL into GLI3R. GLI3R formation leads to its dissociation from SUFU, allowing it to translocate into the nucleus, and repress Hh target genes. When Hh signaling is initiated, SUFU dissociates from GLI3FL and this has two consequences. First, GLI3R production is halted. Second, free GLI3FL translocates to the nucleus, where it is phosphorylated, destabilized, and converted to a transcriptional activator (GLI3A). Phosphorylated in vitro by ULK3.</text>
</comment>
<comment type="disease">
    <text evidence="5 10">Several mutations result in developmental defects of cranofacial and limb structures. In particular the add (anterior digit-pattern deformity) and pdn (polydactyly Nagoya) alleles.</text>
</comment>
<comment type="similarity">
    <text evidence="14">Belongs to the GLI C2H2-type zinc-finger protein family.</text>
</comment>
<comment type="sequence caution" evidence="14">
    <conflict type="frameshift">
        <sequence resource="EMBL-CDS" id="CAA64543"/>
    </conflict>
</comment>
<proteinExistence type="evidence at protein level"/>